<comment type="subcellular location">
    <subcellularLocation>
        <location evidence="2">Cell membrane</location>
        <topology evidence="3">Multi-pass membrane protein</topology>
    </subcellularLocation>
</comment>
<evidence type="ECO:0000255" key="1"/>
<evidence type="ECO:0000255" key="2">
    <source>
        <dbReference type="PROSITE-ProRule" id="PRU00303"/>
    </source>
</evidence>
<evidence type="ECO:0000305" key="3"/>
<accession>Q9ZFU5</accession>
<sequence length="109" mass="12020">MQTNTRKVVTSDAKWHPHLGISFIGCLLAITLEIYFEERIFIPHSGGVSFGLIVLLVINMVTIPVVMALIALLCFIIHIPRKSVNCILLCLLSCILTIAGLFIAYPVGR</sequence>
<keyword id="KW-1003">Cell membrane</keyword>
<keyword id="KW-0472">Membrane</keyword>
<keyword id="KW-1185">Reference proteome</keyword>
<keyword id="KW-0812">Transmembrane</keyword>
<keyword id="KW-1133">Transmembrane helix</keyword>
<protein>
    <recommendedName>
        <fullName>Uncharacterized protein YpfK</fullName>
    </recommendedName>
</protein>
<proteinExistence type="inferred from homology"/>
<organism>
    <name type="scientific">Salmonella typhimurium (strain LT2 / SGSC1412 / ATCC 700720)</name>
    <dbReference type="NCBI Taxonomy" id="99287"/>
    <lineage>
        <taxon>Bacteria</taxon>
        <taxon>Pseudomonadati</taxon>
        <taxon>Pseudomonadota</taxon>
        <taxon>Gammaproteobacteria</taxon>
        <taxon>Enterobacterales</taxon>
        <taxon>Enterobacteriaceae</taxon>
        <taxon>Salmonella</taxon>
    </lineage>
</organism>
<reference key="1">
    <citation type="journal article" date="1993" name="J. Bacteriol.">
        <title>An oxygen-dependent coproporphyrinogen oxidase encoded by the hemF gene of Salmonella typhimurium.</title>
        <authorList>
            <person name="Xu K."/>
            <person name="Elliott T."/>
        </authorList>
    </citation>
    <scope>NUCLEOTIDE SEQUENCE [GENOMIC DNA]</scope>
    <source>
        <strain>LT2</strain>
    </source>
</reference>
<reference key="2">
    <citation type="journal article" date="2001" name="Nature">
        <title>Complete genome sequence of Salmonella enterica serovar Typhimurium LT2.</title>
        <authorList>
            <person name="McClelland M."/>
            <person name="Sanderson K.E."/>
            <person name="Spieth J."/>
            <person name="Clifton S.W."/>
            <person name="Latreille P."/>
            <person name="Courtney L."/>
            <person name="Porwollik S."/>
            <person name="Ali J."/>
            <person name="Dante M."/>
            <person name="Du F."/>
            <person name="Hou S."/>
            <person name="Layman D."/>
            <person name="Leonard S."/>
            <person name="Nguyen C."/>
            <person name="Scott K."/>
            <person name="Holmes A."/>
            <person name="Grewal N."/>
            <person name="Mulvaney E."/>
            <person name="Ryan E."/>
            <person name="Sun H."/>
            <person name="Florea L."/>
            <person name="Miller W."/>
            <person name="Stoneking T."/>
            <person name="Nhan M."/>
            <person name="Waterston R."/>
            <person name="Wilson R.K."/>
        </authorList>
    </citation>
    <scope>NUCLEOTIDE SEQUENCE [LARGE SCALE GENOMIC DNA]</scope>
    <source>
        <strain>LT2 / SGSC1412 / ATCC 700720</strain>
    </source>
</reference>
<reference key="3">
    <citation type="journal article" date="1999" name="J. Bacteriol.">
        <title>The 17-gene ethanolamine (eut) operon of Salmonella typhimurium encodes five homologues of carboxysome shell proteins.</title>
        <authorList>
            <person name="Kofoid E.C."/>
            <person name="Rappleye C.A."/>
            <person name="Stojiljkovic I."/>
            <person name="Roth J.R."/>
        </authorList>
    </citation>
    <scope>NUCLEOTIDE SEQUENCE [GENOMIC DNA] OF 93-109</scope>
    <source>
        <strain>LT2</strain>
    </source>
</reference>
<name>YPFK_SALTY</name>
<gene>
    <name type="primary">ypfK</name>
    <name type="ordered locus">STM2452</name>
</gene>
<dbReference type="EMBL" id="L19503">
    <property type="status" value="NOT_ANNOTATED_CDS"/>
    <property type="molecule type" value="Genomic_DNA"/>
</dbReference>
<dbReference type="EMBL" id="AE006468">
    <property type="protein sequence ID" value="AAL21346.1"/>
    <property type="molecule type" value="Genomic_DNA"/>
</dbReference>
<dbReference type="EMBL" id="AF093749">
    <property type="protein sequence ID" value="AAC78129.1"/>
    <property type="molecule type" value="Genomic_DNA"/>
</dbReference>
<dbReference type="PIR" id="C53302">
    <property type="entry name" value="C53302"/>
</dbReference>
<dbReference type="RefSeq" id="NP_461387.1">
    <property type="nucleotide sequence ID" value="NC_003197.2"/>
</dbReference>
<dbReference type="RefSeq" id="WP_001194344.1">
    <property type="nucleotide sequence ID" value="NC_003197.2"/>
</dbReference>
<dbReference type="SMR" id="Q9ZFU5"/>
<dbReference type="STRING" id="99287.STM2452"/>
<dbReference type="PaxDb" id="99287-STM2452"/>
<dbReference type="GeneID" id="1253974"/>
<dbReference type="KEGG" id="stm:STM2452"/>
<dbReference type="PATRIC" id="fig|99287.12.peg.2590"/>
<dbReference type="HOGENOM" id="CLU_159240_0_0_6"/>
<dbReference type="OMA" id="SHKESKW"/>
<dbReference type="BioCyc" id="SENT99287:STM2452-MONOMER"/>
<dbReference type="Proteomes" id="UP000001014">
    <property type="component" value="Chromosome"/>
</dbReference>
<dbReference type="GO" id="GO:0005886">
    <property type="term" value="C:plasma membrane"/>
    <property type="evidence" value="ECO:0007669"/>
    <property type="project" value="UniProtKB-SubCell"/>
</dbReference>
<dbReference type="PROSITE" id="PS51257">
    <property type="entry name" value="PROKAR_LIPOPROTEIN"/>
    <property type="match status" value="1"/>
</dbReference>
<feature type="chain" id="PRO_0000205372" description="Uncharacterized protein YpfK">
    <location>
        <begin position="1"/>
        <end position="109"/>
    </location>
</feature>
<feature type="transmembrane region" description="Helical" evidence="1">
    <location>
        <begin position="16"/>
        <end position="36"/>
    </location>
</feature>
<feature type="transmembrane region" description="Helical" evidence="1">
    <location>
        <begin position="52"/>
        <end position="72"/>
    </location>
</feature>
<feature type="transmembrane region" description="Helical" evidence="1">
    <location>
        <begin position="87"/>
        <end position="107"/>
    </location>
</feature>